<name>CHLL_HUPLU</name>
<reference key="1">
    <citation type="journal article" date="2005" name="Gene">
        <title>The first complete chloroplast genome sequence of a lycophyte, Huperzia lucidula (Lycopodiaceae).</title>
        <authorList>
            <person name="Wolf P.G."/>
            <person name="Karol K.G."/>
            <person name="Mandoli D.F."/>
            <person name="Kuehl J.V."/>
            <person name="Arumuganathan K."/>
            <person name="Ellis M.W."/>
            <person name="Mishler B.D."/>
            <person name="Kelch D.G."/>
            <person name="Olmstead R.G."/>
            <person name="Boore J.L."/>
        </authorList>
    </citation>
    <scope>NUCLEOTIDE SEQUENCE [LARGE SCALE GENOMIC DNA]</scope>
</reference>
<evidence type="ECO:0000255" key="1">
    <source>
        <dbReference type="HAMAP-Rule" id="MF_00355"/>
    </source>
</evidence>
<evidence type="ECO:0000305" key="2"/>
<gene>
    <name evidence="1" type="primary">chlL</name>
</gene>
<keyword id="KW-0004">4Fe-4S</keyword>
<keyword id="KW-0067">ATP-binding</keyword>
<keyword id="KW-0149">Chlorophyll biosynthesis</keyword>
<keyword id="KW-0150">Chloroplast</keyword>
<keyword id="KW-0408">Iron</keyword>
<keyword id="KW-0411">Iron-sulfur</keyword>
<keyword id="KW-0460">Magnesium</keyword>
<keyword id="KW-0479">Metal-binding</keyword>
<keyword id="KW-0547">Nucleotide-binding</keyword>
<keyword id="KW-0560">Oxidoreductase</keyword>
<keyword id="KW-0602">Photosynthesis</keyword>
<keyword id="KW-0934">Plastid</keyword>
<protein>
    <recommendedName>
        <fullName evidence="1">Light-independent protochlorophyllide reductase iron-sulfur ATP-binding protein</fullName>
        <shortName evidence="1">DPOR subunit L</shortName>
        <shortName evidence="1">LI-POR subunit L</shortName>
        <ecNumber evidence="1">1.3.7.7</ecNumber>
    </recommendedName>
</protein>
<organism>
    <name type="scientific">Huperzia lucidula</name>
    <name type="common">Shining clubmoss</name>
    <name type="synonym">Lycopodium lucidulum</name>
    <dbReference type="NCBI Taxonomy" id="37429"/>
    <lineage>
        <taxon>Eukaryota</taxon>
        <taxon>Viridiplantae</taxon>
        <taxon>Streptophyta</taxon>
        <taxon>Embryophyta</taxon>
        <taxon>Tracheophyta</taxon>
        <taxon>Lycopodiopsida</taxon>
        <taxon>Lycopodiales</taxon>
        <taxon>Lycopodiaceae</taxon>
        <taxon>Huperzioideae</taxon>
        <taxon>Huperzia</taxon>
    </lineage>
</organism>
<proteinExistence type="inferred from homology"/>
<accession>Q5SCY9</accession>
<comment type="function">
    <text evidence="1">Component of the dark-operative protochlorophyllide reductase (DPOR) that uses Mg-ATP and reduced ferredoxin to reduce ring D of protochlorophyllide (Pchlide) to form chlorophyllide a (Chlide). This reaction is light-independent. The L component serves as a unique electron donor to the NB-component of the complex, and binds Mg-ATP.</text>
</comment>
<comment type="catalytic activity">
    <reaction evidence="1">
        <text>chlorophyllide a + oxidized 2[4Fe-4S]-[ferredoxin] + 2 ADP + 2 phosphate = protochlorophyllide a + reduced 2[4Fe-4S]-[ferredoxin] + 2 ATP + 2 H2O</text>
        <dbReference type="Rhea" id="RHEA:28202"/>
        <dbReference type="Rhea" id="RHEA-COMP:10002"/>
        <dbReference type="Rhea" id="RHEA-COMP:10004"/>
        <dbReference type="ChEBI" id="CHEBI:15377"/>
        <dbReference type="ChEBI" id="CHEBI:30616"/>
        <dbReference type="ChEBI" id="CHEBI:33722"/>
        <dbReference type="ChEBI" id="CHEBI:33723"/>
        <dbReference type="ChEBI" id="CHEBI:43474"/>
        <dbReference type="ChEBI" id="CHEBI:83348"/>
        <dbReference type="ChEBI" id="CHEBI:83350"/>
        <dbReference type="ChEBI" id="CHEBI:456216"/>
        <dbReference type="EC" id="1.3.7.7"/>
    </reaction>
</comment>
<comment type="cofactor">
    <cofactor evidence="1">
        <name>[4Fe-4S] cluster</name>
        <dbReference type="ChEBI" id="CHEBI:49883"/>
    </cofactor>
    <text evidence="1">Binds 1 [4Fe-4S] cluster per dimer.</text>
</comment>
<comment type="pathway">
    <text evidence="1">Porphyrin-containing compound metabolism; chlorophyll biosynthesis (light-independent).</text>
</comment>
<comment type="subunit">
    <text evidence="1">Homodimer. Protochlorophyllide reductase is composed of three subunits; ChlL, ChlN and ChlB.</text>
</comment>
<comment type="subcellular location">
    <subcellularLocation>
        <location>Plastid</location>
        <location>Chloroplast</location>
    </subcellularLocation>
</comment>
<comment type="similarity">
    <text evidence="1">Belongs to the NifH/BchL/ChlL family.</text>
</comment>
<comment type="caution">
    <text evidence="2">Arg-129 is present instead of the conserved Cys which is one of the two iron-sulfur binding sites.</text>
</comment>
<comment type="caution">
    <text evidence="2">Lacks the second conserved cysteine (here Arg-129) that binds iron-sulfur cluster in orthologs.</text>
</comment>
<dbReference type="EC" id="1.3.7.7" evidence="1"/>
<dbReference type="EMBL" id="AY660566">
    <property type="protein sequence ID" value="AAT80753.1"/>
    <property type="molecule type" value="Genomic_DNA"/>
</dbReference>
<dbReference type="RefSeq" id="YP_209557.1">
    <property type="nucleotide sequence ID" value="NC_006861.1"/>
</dbReference>
<dbReference type="SMR" id="Q5SCY9"/>
<dbReference type="GeneID" id="3283833"/>
<dbReference type="UniPathway" id="UPA00670"/>
<dbReference type="GO" id="GO:0009507">
    <property type="term" value="C:chloroplast"/>
    <property type="evidence" value="ECO:0007669"/>
    <property type="project" value="UniProtKB-SubCell"/>
</dbReference>
<dbReference type="GO" id="GO:0051539">
    <property type="term" value="F:4 iron, 4 sulfur cluster binding"/>
    <property type="evidence" value="ECO:0007669"/>
    <property type="project" value="UniProtKB-KW"/>
</dbReference>
<dbReference type="GO" id="GO:0005524">
    <property type="term" value="F:ATP binding"/>
    <property type="evidence" value="ECO:0007669"/>
    <property type="project" value="UniProtKB-UniRule"/>
</dbReference>
<dbReference type="GO" id="GO:0046872">
    <property type="term" value="F:metal ion binding"/>
    <property type="evidence" value="ECO:0007669"/>
    <property type="project" value="UniProtKB-KW"/>
</dbReference>
<dbReference type="GO" id="GO:0016730">
    <property type="term" value="F:oxidoreductase activity, acting on iron-sulfur proteins as donors"/>
    <property type="evidence" value="ECO:0007669"/>
    <property type="project" value="InterPro"/>
</dbReference>
<dbReference type="GO" id="GO:0016636">
    <property type="term" value="F:oxidoreductase activity, acting on the CH-CH group of donors, iron-sulfur protein as acceptor"/>
    <property type="evidence" value="ECO:0007669"/>
    <property type="project" value="UniProtKB-UniRule"/>
</dbReference>
<dbReference type="GO" id="GO:0036068">
    <property type="term" value="P:light-independent chlorophyll biosynthetic process"/>
    <property type="evidence" value="ECO:0007669"/>
    <property type="project" value="UniProtKB-UniRule"/>
</dbReference>
<dbReference type="GO" id="GO:0019685">
    <property type="term" value="P:photosynthesis, dark reaction"/>
    <property type="evidence" value="ECO:0007669"/>
    <property type="project" value="InterPro"/>
</dbReference>
<dbReference type="CDD" id="cd02032">
    <property type="entry name" value="Bchl-like"/>
    <property type="match status" value="1"/>
</dbReference>
<dbReference type="Gene3D" id="3.40.50.300">
    <property type="entry name" value="P-loop containing nucleotide triphosphate hydrolases"/>
    <property type="match status" value="1"/>
</dbReference>
<dbReference type="HAMAP" id="MF_00355">
    <property type="entry name" value="ChlL_BchL"/>
    <property type="match status" value="1"/>
</dbReference>
<dbReference type="InterPro" id="IPR030655">
    <property type="entry name" value="NifH/chlL_CS"/>
</dbReference>
<dbReference type="InterPro" id="IPR000392">
    <property type="entry name" value="NifH/frxC"/>
</dbReference>
<dbReference type="InterPro" id="IPR027417">
    <property type="entry name" value="P-loop_NTPase"/>
</dbReference>
<dbReference type="InterPro" id="IPR005971">
    <property type="entry name" value="Protochlorophyllide_ATP-bd"/>
</dbReference>
<dbReference type="NCBIfam" id="TIGR01281">
    <property type="entry name" value="DPOR_bchL"/>
    <property type="match status" value="1"/>
</dbReference>
<dbReference type="PANTHER" id="PTHR42864">
    <property type="entry name" value="LIGHT-INDEPENDENT PROTOCHLOROPHYLLIDE REDUCTASE IRON-SULFUR ATP-BINDING PROTEIN"/>
    <property type="match status" value="1"/>
</dbReference>
<dbReference type="PANTHER" id="PTHR42864:SF2">
    <property type="entry name" value="LIGHT-INDEPENDENT PROTOCHLOROPHYLLIDE REDUCTASE IRON-SULFUR ATP-BINDING PROTEIN"/>
    <property type="match status" value="1"/>
</dbReference>
<dbReference type="Pfam" id="PF00142">
    <property type="entry name" value="Fer4_NifH"/>
    <property type="match status" value="1"/>
</dbReference>
<dbReference type="PIRSF" id="PIRSF000363">
    <property type="entry name" value="Nitrogenase_iron"/>
    <property type="match status" value="1"/>
</dbReference>
<dbReference type="PRINTS" id="PR00091">
    <property type="entry name" value="NITROGNASEII"/>
</dbReference>
<dbReference type="SUPFAM" id="SSF52540">
    <property type="entry name" value="P-loop containing nucleoside triphosphate hydrolases"/>
    <property type="match status" value="1"/>
</dbReference>
<dbReference type="PROSITE" id="PS00746">
    <property type="entry name" value="NIFH_FRXC_1"/>
    <property type="match status" value="1"/>
</dbReference>
<dbReference type="PROSITE" id="PS51026">
    <property type="entry name" value="NIFH_FRXC_3"/>
    <property type="match status" value="1"/>
</dbReference>
<sequence>MKLAIYGKGGIGKSTTSCNISIALARRGKRVLQIGCDPKHDSTFTLTGFLIPTIIDTLQIKDYHYEDVWPEDVIHKGYGGVDRVEAGGPPAGAGCGGYVVGETVKLSKELNAFYEYDIILFDVLGDAVRGGFASPLNYADYCIIIADNGFDALLATNRIAASVREKARTRTHPLRLAGLVGNRTSERDLIDKYVEVCPMPILEILPLIEDIRVSRIKGKTLFEMVESQPYLNYVCDFYLNTADQILSKPEGIIPKEISDRELFSLLSDFYLNPVGNEEQENKENLLDSVVLI</sequence>
<feature type="chain" id="PRO_0000139557" description="Light-independent protochlorophyllide reductase iron-sulfur ATP-binding protein">
    <location>
        <begin position="1"/>
        <end position="292"/>
    </location>
</feature>
<feature type="binding site" evidence="1">
    <location>
        <begin position="10"/>
        <end position="15"/>
    </location>
    <ligand>
        <name>ATP</name>
        <dbReference type="ChEBI" id="CHEBI:30616"/>
    </ligand>
</feature>
<feature type="binding site" evidence="1">
    <location>
        <position position="14"/>
    </location>
    <ligand>
        <name>Mg(2+)</name>
        <dbReference type="ChEBI" id="CHEBI:18420"/>
    </ligand>
</feature>
<feature type="binding site" evidence="1">
    <location>
        <position position="39"/>
    </location>
    <ligand>
        <name>ATP</name>
        <dbReference type="ChEBI" id="CHEBI:30616"/>
    </ligand>
</feature>
<feature type="binding site" evidence="1">
    <location>
        <position position="95"/>
    </location>
    <ligand>
        <name>[4Fe-4S] cluster</name>
        <dbReference type="ChEBI" id="CHEBI:49883"/>
        <note>ligand shared between dimeric partners</note>
    </ligand>
</feature>
<feature type="binding site" evidence="1">
    <location>
        <begin position="182"/>
        <end position="183"/>
    </location>
    <ligand>
        <name>ATP</name>
        <dbReference type="ChEBI" id="CHEBI:30616"/>
    </ligand>
</feature>
<geneLocation type="chloroplast"/>